<organism>
    <name type="scientific">Antilope cervicapra</name>
    <name type="common">Blackbuck</name>
    <dbReference type="NCBI Taxonomy" id="59525"/>
    <lineage>
        <taxon>Eukaryota</taxon>
        <taxon>Metazoa</taxon>
        <taxon>Chordata</taxon>
        <taxon>Craniata</taxon>
        <taxon>Vertebrata</taxon>
        <taxon>Euteleostomi</taxon>
        <taxon>Mammalia</taxon>
        <taxon>Eutheria</taxon>
        <taxon>Laurasiatheria</taxon>
        <taxon>Artiodactyla</taxon>
        <taxon>Ruminantia</taxon>
        <taxon>Pecora</taxon>
        <taxon>Bovidae</taxon>
        <taxon>Antilopinae</taxon>
        <taxon>Antilope</taxon>
    </lineage>
</organism>
<keyword id="KW-0472">Membrane</keyword>
<keyword id="KW-0496">Mitochondrion</keyword>
<keyword id="KW-0999">Mitochondrion inner membrane</keyword>
<keyword id="KW-1278">Translocase</keyword>
<keyword id="KW-0812">Transmembrane</keyword>
<keyword id="KW-1133">Transmembrane helix</keyword>
<gene>
    <name type="primary">MT-CO3</name>
    <name type="synonym">COIII</name>
    <name type="synonym">COXIII</name>
    <name type="synonym">MTCO3</name>
</gene>
<proteinExistence type="inferred from homology"/>
<reference key="1">
    <citation type="journal article" date="1999" name="Mol. Phylogenet. Evol.">
        <title>Phylogenetic relationships in the bovid subfamily Antilopinae based on mitochondrial DNA sequences.</title>
        <authorList>
            <person name="Rebholz W.E.R."/>
            <person name="Harley E.H."/>
        </authorList>
    </citation>
    <scope>NUCLEOTIDE SEQUENCE [GENOMIC DNA]</scope>
</reference>
<name>COX3_ANTCE</name>
<feature type="chain" id="PRO_0000183734" description="Cytochrome c oxidase subunit 3">
    <location>
        <begin position="1"/>
        <end position="261"/>
    </location>
</feature>
<feature type="topological domain" description="Mitochondrial matrix" evidence="1">
    <location>
        <begin position="1"/>
        <end position="15"/>
    </location>
</feature>
<feature type="transmembrane region" description="Helical; Name=I" evidence="1">
    <location>
        <begin position="16"/>
        <end position="34"/>
    </location>
</feature>
<feature type="topological domain" description="Mitochondrial intermembrane" evidence="1">
    <location>
        <begin position="35"/>
        <end position="40"/>
    </location>
</feature>
<feature type="transmembrane region" description="Helical; Name=II" evidence="1">
    <location>
        <begin position="41"/>
        <end position="66"/>
    </location>
</feature>
<feature type="topological domain" description="Mitochondrial matrix" evidence="1">
    <location>
        <begin position="67"/>
        <end position="72"/>
    </location>
</feature>
<feature type="transmembrane region" description="Helical; Name=III" evidence="1">
    <location>
        <begin position="73"/>
        <end position="105"/>
    </location>
</feature>
<feature type="topological domain" description="Mitochondrial intermembrane" evidence="1">
    <location>
        <begin position="106"/>
        <end position="128"/>
    </location>
</feature>
<feature type="transmembrane region" description="Helical; Name=IV" evidence="1">
    <location>
        <begin position="129"/>
        <end position="152"/>
    </location>
</feature>
<feature type="topological domain" description="Mitochondrial matrix" evidence="1">
    <location>
        <begin position="153"/>
        <end position="155"/>
    </location>
</feature>
<feature type="transmembrane region" description="Helical; Name=V" evidence="1">
    <location>
        <begin position="156"/>
        <end position="183"/>
    </location>
</feature>
<feature type="topological domain" description="Mitochondrial intermembrane" evidence="1">
    <location>
        <begin position="184"/>
        <end position="190"/>
    </location>
</feature>
<feature type="transmembrane region" description="Helical; Name=VI" evidence="1">
    <location>
        <begin position="191"/>
        <end position="223"/>
    </location>
</feature>
<feature type="topological domain" description="Mitochondrial matrix" evidence="1">
    <location>
        <begin position="224"/>
        <end position="232"/>
    </location>
</feature>
<feature type="transmembrane region" description="Helical; Name=VII" evidence="1">
    <location>
        <begin position="233"/>
        <end position="256"/>
    </location>
</feature>
<feature type="topological domain" description="Mitochondrial intermembrane" evidence="1">
    <location>
        <begin position="257"/>
        <end position="261"/>
    </location>
</feature>
<comment type="function">
    <text evidence="2">Component of the cytochrome c oxidase, the last enzyme in the mitochondrial electron transport chain which drives oxidative phosphorylation. The respiratory chain contains 3 multisubunit complexes succinate dehydrogenase (complex II, CII), ubiquinol-cytochrome c oxidoreductase (cytochrome b-c1 complex, complex III, CIII) and cytochrome c oxidase (complex IV, CIV), that cooperate to transfer electrons derived from NADH and succinate to molecular oxygen, creating an electrochemical gradient over the inner membrane that drives transmembrane transport and the ATP synthase. Cytochrome c oxidase is the component of the respiratory chain that catalyzes the reduction of oxygen to water. Electrons originating from reduced cytochrome c in the intermembrane space (IMS) are transferred via the dinuclear copper A center (CU(A)) of subunit 2 and heme A of subunit 1 to the active site in subunit 1, a binuclear center (BNC) formed by heme A3 and copper B (CU(B)). The BNC reduces molecular oxygen to 2 water molecules using 4 electrons from cytochrome c in the IMS and 4 protons from the mitochondrial matrix.</text>
</comment>
<comment type="catalytic activity">
    <reaction evidence="2">
        <text>4 Fe(II)-[cytochrome c] + O2 + 8 H(+)(in) = 4 Fe(III)-[cytochrome c] + 2 H2O + 4 H(+)(out)</text>
        <dbReference type="Rhea" id="RHEA:11436"/>
        <dbReference type="Rhea" id="RHEA-COMP:10350"/>
        <dbReference type="Rhea" id="RHEA-COMP:14399"/>
        <dbReference type="ChEBI" id="CHEBI:15377"/>
        <dbReference type="ChEBI" id="CHEBI:15378"/>
        <dbReference type="ChEBI" id="CHEBI:15379"/>
        <dbReference type="ChEBI" id="CHEBI:29033"/>
        <dbReference type="ChEBI" id="CHEBI:29034"/>
        <dbReference type="EC" id="7.1.1.9"/>
    </reaction>
    <physiologicalReaction direction="left-to-right" evidence="2">
        <dbReference type="Rhea" id="RHEA:11437"/>
    </physiologicalReaction>
</comment>
<comment type="subunit">
    <text evidence="1">Component of the cytochrome c oxidase (complex IV, CIV), a multisubunit enzyme composed of 14 subunits. The complex is composed of a catalytic core of 3 subunits MT-CO1, MT-CO2 and MT-CO3, encoded in the mitochondrial DNA, and 11 supernumerary subunits COX4I, COX5A, COX5B, COX6A, COX6B, COX6C, COX7A, COX7B, COX7C, COX8 and NDUFA4, which are encoded in the nuclear genome. The complex exists as a monomer or a dimer and forms supercomplexes (SCs) in the inner mitochondrial membrane with NADH-ubiquinone oxidoreductase (complex I, CI) and ubiquinol-cytochrome c oxidoreductase (cytochrome b-c1 complex, complex III, CIII), resulting in different assemblies (supercomplex SCI(1)III(2)IV(1) and megacomplex MCI(2)III(2)IV(2)).</text>
</comment>
<comment type="subcellular location">
    <subcellularLocation>
        <location evidence="1">Mitochondrion inner membrane</location>
        <topology evidence="1">Multi-pass membrane protein</topology>
    </subcellularLocation>
</comment>
<comment type="similarity">
    <text evidence="3">Belongs to the cytochrome c oxidase subunit 3 family.</text>
</comment>
<accession>O47702</accession>
<protein>
    <recommendedName>
        <fullName>Cytochrome c oxidase subunit 3</fullName>
        <ecNumber>7.1.1.9</ecNumber>
    </recommendedName>
    <alternativeName>
        <fullName>Cytochrome c oxidase polypeptide III</fullName>
    </alternativeName>
</protein>
<geneLocation type="mitochondrion"/>
<sequence>MTHQTHAYHMVNPSPWPLTGALSALLMTSGLIMWFHFNSTTLLMLGLTTNMLTMYQWWRDVIRESTFQGHHTPNVQKGLRYGMILFIISEVLFFTGFFWAFYHSSLAPTPELGGCWPPTGIHPLNPLEVPLLNTSVLLASGVSITWAHHSLMEGNRNHMLQALFITIALGVYFTLLQASEYYEAPFTISDGVYGSTFFVATGFHGLHVIIGSTFLIVCFFRQLKFHFTSNHHFGFEAAAWYWHFVDVVWLFLYVSIYWWGS</sequence>
<dbReference type="EC" id="7.1.1.9"/>
<dbReference type="EMBL" id="AF030467">
    <property type="protein sequence ID" value="AAB93606.1"/>
    <property type="molecule type" value="Genomic_DNA"/>
</dbReference>
<dbReference type="RefSeq" id="YP_002600876.1">
    <property type="nucleotide sequence ID" value="NC_012098.1"/>
</dbReference>
<dbReference type="SMR" id="O47702"/>
<dbReference type="GeneID" id="7440908"/>
<dbReference type="CTD" id="4514"/>
<dbReference type="GO" id="GO:0005743">
    <property type="term" value="C:mitochondrial inner membrane"/>
    <property type="evidence" value="ECO:0007669"/>
    <property type="project" value="UniProtKB-SubCell"/>
</dbReference>
<dbReference type="GO" id="GO:0045277">
    <property type="term" value="C:respiratory chain complex IV"/>
    <property type="evidence" value="ECO:0000250"/>
    <property type="project" value="UniProtKB"/>
</dbReference>
<dbReference type="GO" id="GO:0004129">
    <property type="term" value="F:cytochrome-c oxidase activity"/>
    <property type="evidence" value="ECO:0007669"/>
    <property type="project" value="UniProtKB-EC"/>
</dbReference>
<dbReference type="GO" id="GO:0006123">
    <property type="term" value="P:mitochondrial electron transport, cytochrome c to oxygen"/>
    <property type="evidence" value="ECO:0007669"/>
    <property type="project" value="TreeGrafter"/>
</dbReference>
<dbReference type="GO" id="GO:0008535">
    <property type="term" value="P:respiratory chain complex IV assembly"/>
    <property type="evidence" value="ECO:0000250"/>
    <property type="project" value="UniProtKB"/>
</dbReference>
<dbReference type="CDD" id="cd01665">
    <property type="entry name" value="Cyt_c_Oxidase_III"/>
    <property type="match status" value="1"/>
</dbReference>
<dbReference type="FunFam" id="1.10.287.70:FF:000048">
    <property type="entry name" value="Cytochrome c oxidase subunit 3"/>
    <property type="match status" value="1"/>
</dbReference>
<dbReference type="FunFam" id="1.20.120.80:FF:000002">
    <property type="entry name" value="Cytochrome c oxidase subunit 3"/>
    <property type="match status" value="1"/>
</dbReference>
<dbReference type="Gene3D" id="1.10.287.70">
    <property type="match status" value="1"/>
</dbReference>
<dbReference type="Gene3D" id="1.20.120.80">
    <property type="entry name" value="Cytochrome c oxidase, subunit III, four-helix bundle"/>
    <property type="match status" value="1"/>
</dbReference>
<dbReference type="InterPro" id="IPR024791">
    <property type="entry name" value="Cyt_c/ubiquinol_Oxase_su3"/>
</dbReference>
<dbReference type="InterPro" id="IPR033945">
    <property type="entry name" value="Cyt_c_oxase_su3_dom"/>
</dbReference>
<dbReference type="InterPro" id="IPR000298">
    <property type="entry name" value="Cyt_c_oxidase-like_su3"/>
</dbReference>
<dbReference type="InterPro" id="IPR035973">
    <property type="entry name" value="Cyt_c_oxidase_su3-like_sf"/>
</dbReference>
<dbReference type="InterPro" id="IPR013833">
    <property type="entry name" value="Cyt_c_oxidase_su3_a-hlx"/>
</dbReference>
<dbReference type="PANTHER" id="PTHR11403:SF7">
    <property type="entry name" value="CYTOCHROME C OXIDASE SUBUNIT 3"/>
    <property type="match status" value="1"/>
</dbReference>
<dbReference type="PANTHER" id="PTHR11403">
    <property type="entry name" value="CYTOCHROME C OXIDASE SUBUNIT III"/>
    <property type="match status" value="1"/>
</dbReference>
<dbReference type="Pfam" id="PF00510">
    <property type="entry name" value="COX3"/>
    <property type="match status" value="1"/>
</dbReference>
<dbReference type="SUPFAM" id="SSF81452">
    <property type="entry name" value="Cytochrome c oxidase subunit III-like"/>
    <property type="match status" value="1"/>
</dbReference>
<dbReference type="PROSITE" id="PS50253">
    <property type="entry name" value="COX3"/>
    <property type="match status" value="1"/>
</dbReference>
<evidence type="ECO:0000250" key="1">
    <source>
        <dbReference type="UniProtKB" id="P00415"/>
    </source>
</evidence>
<evidence type="ECO:0000250" key="2">
    <source>
        <dbReference type="UniProtKB" id="P00420"/>
    </source>
</evidence>
<evidence type="ECO:0000305" key="3"/>